<dbReference type="GO" id="GO:0005576">
    <property type="term" value="C:extracellular region"/>
    <property type="evidence" value="ECO:0007669"/>
    <property type="project" value="UniProtKB-SubCell"/>
</dbReference>
<dbReference type="GO" id="GO:0004867">
    <property type="term" value="F:serine-type endopeptidase inhibitor activity"/>
    <property type="evidence" value="ECO:0007669"/>
    <property type="project" value="UniProtKB-KW"/>
</dbReference>
<dbReference type="InterPro" id="IPR036201">
    <property type="entry name" value="Pacifastin_dom_sf"/>
</dbReference>
<dbReference type="SUPFAM" id="SSF57283">
    <property type="entry name" value="PMP inhibitors"/>
    <property type="match status" value="1"/>
</dbReference>
<feature type="peptide" id="PRO_0000414706" description="Serine protease inhibitor 1" evidence="4">
    <location>
        <begin position="1"/>
        <end position="21" status="greater than"/>
    </location>
</feature>
<feature type="domain" description="Pacifastin" evidence="2">
    <location>
        <begin position="1"/>
        <end position="21" status="greater than"/>
    </location>
</feature>
<feature type="region of interest" description="Disordered" evidence="3">
    <location>
        <begin position="1"/>
        <end position="21"/>
    </location>
</feature>
<feature type="non-terminal residue" evidence="5">
    <location>
        <position position="21"/>
    </location>
</feature>
<evidence type="ECO:0000250" key="1">
    <source>
        <dbReference type="UniProtKB" id="O46162"/>
    </source>
</evidence>
<evidence type="ECO:0000255" key="2"/>
<evidence type="ECO:0000256" key="3">
    <source>
        <dbReference type="SAM" id="MobiDB-lite"/>
    </source>
</evidence>
<evidence type="ECO:0000269" key="4">
    <source ref="1"/>
</evidence>
<evidence type="ECO:0000303" key="5">
    <source ref="1"/>
</evidence>
<evidence type="ECO:0000305" key="6"/>
<protein>
    <recommendedName>
        <fullName>Serine protease inhibitor 1</fullName>
    </recommendedName>
    <alternativeName>
        <fullName>Protease inhibitor MSPI-1</fullName>
    </alternativeName>
</protein>
<accession>B3A0N8</accession>
<reference evidence="6" key="1">
    <citation type="submission" date="2011-10" db="UniProtKB">
        <title>Pacifastin-related serine protease inhibitors of the migratory grasshopper, Melanoplus sanguinipes.</title>
        <authorList>
            <person name="Taub-Montemayor T.E."/>
            <person name="Jones N.J."/>
            <person name="Linse K.D."/>
            <person name="Rankin M.A."/>
        </authorList>
    </citation>
    <scope>PROTEIN SEQUENCE</scope>
    <scope>SUBCELLULAR LOCATION</scope>
    <scope>TISSUE SPECIFICITY</scope>
    <source>
        <tissue evidence="4">Hemolymph</tissue>
    </source>
</reference>
<name>MSPI1_MELSA</name>
<proteinExistence type="evidence at protein level"/>
<sequence length="21" mass="2286">EQQCTPGQTKKEDCNNCTSGD</sequence>
<comment type="function">
    <text evidence="1">Probable serine protease inhibitor.</text>
</comment>
<comment type="subcellular location">
    <subcellularLocation>
        <location evidence="4">Secreted</location>
    </subcellularLocation>
</comment>
<comment type="tissue specificity">
    <text evidence="4">Expressed in hemolymph.</text>
</comment>
<comment type="similarity">
    <text evidence="2">Belongs to the protease inhibitor I19 family.</text>
</comment>
<keyword id="KW-0903">Direct protein sequencing</keyword>
<keyword id="KW-0646">Protease inhibitor</keyword>
<keyword id="KW-0964">Secreted</keyword>
<keyword id="KW-0722">Serine protease inhibitor</keyword>
<organism>
    <name type="scientific">Melanoplus sanguinipes</name>
    <name type="common">Migratory grasshopper</name>
    <dbReference type="NCBI Taxonomy" id="65742"/>
    <lineage>
        <taxon>Eukaryota</taxon>
        <taxon>Metazoa</taxon>
        <taxon>Ecdysozoa</taxon>
        <taxon>Arthropoda</taxon>
        <taxon>Hexapoda</taxon>
        <taxon>Insecta</taxon>
        <taxon>Pterygota</taxon>
        <taxon>Neoptera</taxon>
        <taxon>Polyneoptera</taxon>
        <taxon>Orthoptera</taxon>
        <taxon>Caelifera</taxon>
        <taxon>Acrididea</taxon>
        <taxon>Acridomorpha</taxon>
        <taxon>Acridoidea</taxon>
        <taxon>Acrididae</taxon>
        <taxon>Melanoplinae</taxon>
        <taxon>Melanoplini</taxon>
        <taxon>Melanoplus</taxon>
    </lineage>
</organism>